<protein>
    <recommendedName>
        <fullName>Probable carboxypeptidase TRV_02791</fullName>
        <ecNumber>3.4.17.-</ecNumber>
    </recommendedName>
    <alternativeName>
        <fullName>Peptidase M20 domain-containing protein TRV_02791</fullName>
    </alternativeName>
</protein>
<comment type="cofactor">
    <cofactor evidence="1">
        <name>Zn(2+)</name>
        <dbReference type="ChEBI" id="CHEBI:29105"/>
    </cofactor>
    <text evidence="1">Binds 2 Zn(2+) ions per subunit.</text>
</comment>
<comment type="subcellular location">
    <subcellularLocation>
        <location evidence="3">Secreted</location>
    </subcellularLocation>
</comment>
<comment type="similarity">
    <text evidence="3">Belongs to the peptidase M20A family.</text>
</comment>
<organism>
    <name type="scientific">Trichophyton verrucosum (strain HKI 0517)</name>
    <dbReference type="NCBI Taxonomy" id="663202"/>
    <lineage>
        <taxon>Eukaryota</taxon>
        <taxon>Fungi</taxon>
        <taxon>Dikarya</taxon>
        <taxon>Ascomycota</taxon>
        <taxon>Pezizomycotina</taxon>
        <taxon>Eurotiomycetes</taxon>
        <taxon>Eurotiomycetidae</taxon>
        <taxon>Onygenales</taxon>
        <taxon>Arthrodermataceae</taxon>
        <taxon>Trichophyton</taxon>
    </lineage>
</organism>
<sequence length="460" mass="49832">MQKTYLWALVSLLASSLVDARSAVFDQTPLDIGGSDDSFDSIARIDPNSNDLLKSEMDKVIASSELLSLHRALVEIKSISDNEQAVGGFLMDYLYSKNFTVEKQFVDYDDPTGKPIRTNRRFNIYAYPGNSASPGIILTSHIDTVPPFIPYSLSHPEPASFKREDILISGRGTVDDKASVACQVIAAMDHLEKHPDIPIGLLFVVSEEVGGRGMSTFSNSRLNSGTYHTIIFGEPTERALVAGHKGMVSFTIRVHGKPAHSGYPWLGRSAVSEMLPILTEVDRLGDIPVSQGGLPSSEKYGRTTLNIGFMSGGVAANVVAEEAVANVAVRLAAGDPEDAKDIIFRAIRNAATKHRKDATVVISNGLERPKGDIEVIFGLEAYGVVDIDADVDGFNVTTVNYGTDIPHWKIYGDNVKRYLYGPGTIFVAHGKNEALTVGELEAGLEGYKTLVAKAAERERS</sequence>
<keyword id="KW-0325">Glycoprotein</keyword>
<keyword id="KW-0378">Hydrolase</keyword>
<keyword id="KW-0479">Metal-binding</keyword>
<keyword id="KW-0645">Protease</keyword>
<keyword id="KW-0964">Secreted</keyword>
<keyword id="KW-0732">Signal</keyword>
<keyword id="KW-0862">Zinc</keyword>
<reference key="1">
    <citation type="journal article" date="2011" name="Genome Biol.">
        <title>Comparative and functional genomics provide insights into the pathogenicity of dermatophytic fungi.</title>
        <authorList>
            <person name="Burmester A."/>
            <person name="Shelest E."/>
            <person name="Gloeckner G."/>
            <person name="Heddergott C."/>
            <person name="Schindler S."/>
            <person name="Staib P."/>
            <person name="Heidel A."/>
            <person name="Felder M."/>
            <person name="Petzold A."/>
            <person name="Szafranski K."/>
            <person name="Feuermann M."/>
            <person name="Pedruzzi I."/>
            <person name="Priebe S."/>
            <person name="Groth M."/>
            <person name="Winkler R."/>
            <person name="Li W."/>
            <person name="Kniemeyer O."/>
            <person name="Schroeckh V."/>
            <person name="Hertweck C."/>
            <person name="Hube B."/>
            <person name="White T.C."/>
            <person name="Platzer M."/>
            <person name="Guthke R."/>
            <person name="Heitman J."/>
            <person name="Woestemeyer J."/>
            <person name="Zipfel P.F."/>
            <person name="Monod M."/>
            <person name="Brakhage A.A."/>
        </authorList>
    </citation>
    <scope>NUCLEOTIDE SEQUENCE [LARGE SCALE GENOMIC DNA]</scope>
    <source>
        <strain>HKI 0517</strain>
    </source>
</reference>
<feature type="signal peptide" evidence="2">
    <location>
        <begin position="1"/>
        <end position="22"/>
    </location>
</feature>
<feature type="chain" id="PRO_0000411241" description="Probable carboxypeptidase TRV_02791">
    <location>
        <begin position="23"/>
        <end position="460"/>
    </location>
</feature>
<feature type="active site" description="Proton acceptor" evidence="1">
    <location>
        <position position="207"/>
    </location>
</feature>
<feature type="binding site" evidence="1">
    <location>
        <position position="175"/>
    </location>
    <ligand>
        <name>Zn(2+)</name>
        <dbReference type="ChEBI" id="CHEBI:29105"/>
        <label>1</label>
    </ligand>
</feature>
<feature type="binding site" evidence="1">
    <location>
        <position position="175"/>
    </location>
    <ligand>
        <name>Zn(2+)</name>
        <dbReference type="ChEBI" id="CHEBI:29105"/>
        <label>2</label>
    </ligand>
</feature>
<feature type="binding site" evidence="1">
    <location>
        <position position="208"/>
    </location>
    <ligand>
        <name>Zn(2+)</name>
        <dbReference type="ChEBI" id="CHEBI:29105"/>
        <label>1</label>
    </ligand>
</feature>
<feature type="glycosylation site" description="N-linked (GlcNAc...) asparagine" evidence="2">
    <location>
        <position position="98"/>
    </location>
</feature>
<feature type="glycosylation site" description="N-linked (GlcNAc...) asparagine" evidence="2">
    <location>
        <position position="395"/>
    </location>
</feature>
<accession>D4D6R4</accession>
<name>P20D1_TRIVH</name>
<evidence type="ECO:0000250" key="1"/>
<evidence type="ECO:0000255" key="2"/>
<evidence type="ECO:0000305" key="3"/>
<proteinExistence type="inferred from homology"/>
<dbReference type="EC" id="3.4.17.-"/>
<dbReference type="EMBL" id="ACYE01000145">
    <property type="protein sequence ID" value="EFE42483.1"/>
    <property type="molecule type" value="Genomic_DNA"/>
</dbReference>
<dbReference type="RefSeq" id="XP_003023101.1">
    <property type="nucleotide sequence ID" value="XM_003023055.1"/>
</dbReference>
<dbReference type="SMR" id="D4D6R4"/>
<dbReference type="GeneID" id="9583121"/>
<dbReference type="KEGG" id="tve:TRV_02791"/>
<dbReference type="HOGENOM" id="CLU_021802_3_0_1"/>
<dbReference type="OrthoDB" id="3923at34384"/>
<dbReference type="Proteomes" id="UP000008383">
    <property type="component" value="Unassembled WGS sequence"/>
</dbReference>
<dbReference type="GO" id="GO:0005576">
    <property type="term" value="C:extracellular region"/>
    <property type="evidence" value="ECO:0007669"/>
    <property type="project" value="UniProtKB-SubCell"/>
</dbReference>
<dbReference type="GO" id="GO:0046872">
    <property type="term" value="F:metal ion binding"/>
    <property type="evidence" value="ECO:0007669"/>
    <property type="project" value="UniProtKB-KW"/>
</dbReference>
<dbReference type="GO" id="GO:0008233">
    <property type="term" value="F:peptidase activity"/>
    <property type="evidence" value="ECO:0007669"/>
    <property type="project" value="UniProtKB-KW"/>
</dbReference>
<dbReference type="GO" id="GO:0006508">
    <property type="term" value="P:proteolysis"/>
    <property type="evidence" value="ECO:0007669"/>
    <property type="project" value="UniProtKB-KW"/>
</dbReference>
<dbReference type="CDD" id="cd05652">
    <property type="entry name" value="M20_ArgE_DapE-like_fungal"/>
    <property type="match status" value="1"/>
</dbReference>
<dbReference type="Gene3D" id="3.30.70.360">
    <property type="match status" value="1"/>
</dbReference>
<dbReference type="Gene3D" id="3.40.630.10">
    <property type="entry name" value="Zn peptidases"/>
    <property type="match status" value="1"/>
</dbReference>
<dbReference type="InterPro" id="IPR036264">
    <property type="entry name" value="Bact_exopeptidase_dim_dom"/>
</dbReference>
<dbReference type="InterPro" id="IPR002933">
    <property type="entry name" value="Peptidase_M20"/>
</dbReference>
<dbReference type="InterPro" id="IPR011650">
    <property type="entry name" value="Peptidase_M20_dimer"/>
</dbReference>
<dbReference type="InterPro" id="IPR050072">
    <property type="entry name" value="Peptidase_M20A"/>
</dbReference>
<dbReference type="PANTHER" id="PTHR43808">
    <property type="entry name" value="ACETYLORNITHINE DEACETYLASE"/>
    <property type="match status" value="1"/>
</dbReference>
<dbReference type="PANTHER" id="PTHR43808:SF8">
    <property type="entry name" value="PEPTIDASE M20 DIMERISATION DOMAIN-CONTAINING PROTEIN"/>
    <property type="match status" value="1"/>
</dbReference>
<dbReference type="Pfam" id="PF07687">
    <property type="entry name" value="M20_dimer"/>
    <property type="match status" value="1"/>
</dbReference>
<dbReference type="Pfam" id="PF01546">
    <property type="entry name" value="Peptidase_M20"/>
    <property type="match status" value="1"/>
</dbReference>
<dbReference type="SUPFAM" id="SSF55031">
    <property type="entry name" value="Bacterial exopeptidase dimerisation domain"/>
    <property type="match status" value="1"/>
</dbReference>
<dbReference type="SUPFAM" id="SSF53187">
    <property type="entry name" value="Zn-dependent exopeptidases"/>
    <property type="match status" value="1"/>
</dbReference>
<gene>
    <name type="ORF">TRV_02791</name>
</gene>